<sequence length="291" mass="32786">MQELRFVLIIVGALAIAALLFHGLWTSKKEGKSKFGDKPLRKMKVESDDPPSRAFAAEDDFEIIRKERKEPDFGIPNQQHDPLISDFAAHDELDEEEDEEARIPVQPQSQPQPRKVQPQVEMPRVAPNVPMAKVQPEVVTEIEVQEPQEEKLDVIVLNVHCAGNQPFIGTKLFDSMQQNGLLFGEMDIFHRHADLSGTGKVLFSVANMMQPGTLMHDDPADFSTKGISFFMTLPCFGDPEQNFKLMLKTAQQIADDLGGHVLDDARNLMTPNRLDAYRKQIQEFKVRAAQA</sequence>
<reference key="1">
    <citation type="journal article" date="2008" name="PLoS ONE">
        <title>A recalibrated molecular clock and independent origins for the cholera pandemic clones.</title>
        <authorList>
            <person name="Feng L."/>
            <person name="Reeves P.R."/>
            <person name="Lan R."/>
            <person name="Ren Y."/>
            <person name="Gao C."/>
            <person name="Zhou Z."/>
            <person name="Ren Y."/>
            <person name="Cheng J."/>
            <person name="Wang W."/>
            <person name="Wang J."/>
            <person name="Qian W."/>
            <person name="Li D."/>
            <person name="Wang L."/>
        </authorList>
    </citation>
    <scope>NUCLEOTIDE SEQUENCE [LARGE SCALE GENOMIC DNA]</scope>
    <source>
        <strain>M66-2</strain>
    </source>
</reference>
<dbReference type="EMBL" id="CP001233">
    <property type="protein sequence ID" value="ACP05244.1"/>
    <property type="molecule type" value="Genomic_DNA"/>
</dbReference>
<dbReference type="RefSeq" id="WP_001157059.1">
    <property type="nucleotide sequence ID" value="NC_012578.1"/>
</dbReference>
<dbReference type="SMR" id="C3LTL8"/>
<dbReference type="KEGG" id="vcm:VCM66_0926"/>
<dbReference type="HOGENOM" id="CLU_030174_1_0_6"/>
<dbReference type="Proteomes" id="UP000001217">
    <property type="component" value="Chromosome I"/>
</dbReference>
<dbReference type="GO" id="GO:0032153">
    <property type="term" value="C:cell division site"/>
    <property type="evidence" value="ECO:0007669"/>
    <property type="project" value="UniProtKB-UniRule"/>
</dbReference>
<dbReference type="GO" id="GO:0005886">
    <property type="term" value="C:plasma membrane"/>
    <property type="evidence" value="ECO:0007669"/>
    <property type="project" value="UniProtKB-SubCell"/>
</dbReference>
<dbReference type="GO" id="GO:0000917">
    <property type="term" value="P:division septum assembly"/>
    <property type="evidence" value="ECO:0007669"/>
    <property type="project" value="TreeGrafter"/>
</dbReference>
<dbReference type="GO" id="GO:0043093">
    <property type="term" value="P:FtsZ-dependent cytokinesis"/>
    <property type="evidence" value="ECO:0007669"/>
    <property type="project" value="UniProtKB-UniRule"/>
</dbReference>
<dbReference type="CDD" id="cd00231">
    <property type="entry name" value="ZipA"/>
    <property type="match status" value="1"/>
</dbReference>
<dbReference type="FunFam" id="3.30.1400.10:FF:000001">
    <property type="entry name" value="Cell division protein ZipA"/>
    <property type="match status" value="1"/>
</dbReference>
<dbReference type="Gene3D" id="3.30.1400.10">
    <property type="entry name" value="ZipA, C-terminal FtsZ-binding domain"/>
    <property type="match status" value="1"/>
</dbReference>
<dbReference type="HAMAP" id="MF_00509">
    <property type="entry name" value="ZipA"/>
    <property type="match status" value="1"/>
</dbReference>
<dbReference type="InterPro" id="IPR011919">
    <property type="entry name" value="Cell_div_ZipA"/>
</dbReference>
<dbReference type="InterPro" id="IPR007449">
    <property type="entry name" value="ZipA_FtsZ-bd_C"/>
</dbReference>
<dbReference type="InterPro" id="IPR036765">
    <property type="entry name" value="ZipA_FtsZ-bd_C_sf"/>
</dbReference>
<dbReference type="NCBIfam" id="TIGR02205">
    <property type="entry name" value="septum_zipA"/>
    <property type="match status" value="1"/>
</dbReference>
<dbReference type="PANTHER" id="PTHR38685">
    <property type="entry name" value="CELL DIVISION PROTEIN ZIPA"/>
    <property type="match status" value="1"/>
</dbReference>
<dbReference type="PANTHER" id="PTHR38685:SF1">
    <property type="entry name" value="CELL DIVISION PROTEIN ZIPA"/>
    <property type="match status" value="1"/>
</dbReference>
<dbReference type="Pfam" id="PF04354">
    <property type="entry name" value="ZipA_C"/>
    <property type="match status" value="1"/>
</dbReference>
<dbReference type="SMART" id="SM00771">
    <property type="entry name" value="ZipA_C"/>
    <property type="match status" value="1"/>
</dbReference>
<dbReference type="SUPFAM" id="SSF64383">
    <property type="entry name" value="Cell-division protein ZipA, C-terminal domain"/>
    <property type="match status" value="1"/>
</dbReference>
<feature type="chain" id="PRO_1000200696" description="Cell division protein ZipA">
    <location>
        <begin position="1"/>
        <end position="291"/>
    </location>
</feature>
<feature type="topological domain" description="Periplasmic" evidence="1">
    <location>
        <begin position="1"/>
        <end position="5"/>
    </location>
</feature>
<feature type="transmembrane region" description="Helical" evidence="1">
    <location>
        <begin position="6"/>
        <end position="26"/>
    </location>
</feature>
<feature type="topological domain" description="Cytoplasmic" evidence="1">
    <location>
        <begin position="27"/>
        <end position="291"/>
    </location>
</feature>
<feature type="region of interest" description="Disordered" evidence="2">
    <location>
        <begin position="29"/>
        <end position="61"/>
    </location>
</feature>
<feature type="region of interest" description="Disordered" evidence="2">
    <location>
        <begin position="92"/>
        <end position="119"/>
    </location>
</feature>
<feature type="compositionally biased region" description="Basic and acidic residues" evidence="2">
    <location>
        <begin position="29"/>
        <end position="51"/>
    </location>
</feature>
<evidence type="ECO:0000255" key="1">
    <source>
        <dbReference type="HAMAP-Rule" id="MF_00509"/>
    </source>
</evidence>
<evidence type="ECO:0000256" key="2">
    <source>
        <dbReference type="SAM" id="MobiDB-lite"/>
    </source>
</evidence>
<gene>
    <name evidence="1" type="primary">zipA</name>
    <name type="ordered locus">VCM66_0926</name>
</gene>
<protein>
    <recommendedName>
        <fullName evidence="1">Cell division protein ZipA</fullName>
    </recommendedName>
</protein>
<accession>C3LTL8</accession>
<keyword id="KW-0131">Cell cycle</keyword>
<keyword id="KW-0132">Cell division</keyword>
<keyword id="KW-0997">Cell inner membrane</keyword>
<keyword id="KW-1003">Cell membrane</keyword>
<keyword id="KW-0472">Membrane</keyword>
<keyword id="KW-0812">Transmembrane</keyword>
<keyword id="KW-1133">Transmembrane helix</keyword>
<name>ZIPA_VIBCM</name>
<proteinExistence type="inferred from homology"/>
<comment type="function">
    <text evidence="1">Essential cell division protein that stabilizes the FtsZ protofilaments by cross-linking them and that serves as a cytoplasmic membrane anchor for the Z ring. Also required for the recruitment to the septal ring of downstream cell division proteins.</text>
</comment>
<comment type="subunit">
    <text evidence="1">Interacts with FtsZ via their C-terminal domains.</text>
</comment>
<comment type="subcellular location">
    <subcellularLocation>
        <location evidence="1">Cell inner membrane</location>
        <topology evidence="1">Single-pass type I membrane protein</topology>
    </subcellularLocation>
    <text evidence="1">Localizes to the Z ring in an FtsZ-dependent manner.</text>
</comment>
<comment type="similarity">
    <text evidence="1">Belongs to the ZipA family.</text>
</comment>
<organism>
    <name type="scientific">Vibrio cholerae serotype O1 (strain M66-2)</name>
    <dbReference type="NCBI Taxonomy" id="579112"/>
    <lineage>
        <taxon>Bacteria</taxon>
        <taxon>Pseudomonadati</taxon>
        <taxon>Pseudomonadota</taxon>
        <taxon>Gammaproteobacteria</taxon>
        <taxon>Vibrionales</taxon>
        <taxon>Vibrionaceae</taxon>
        <taxon>Vibrio</taxon>
    </lineage>
</organism>